<gene>
    <name evidence="1" type="primary">rpoB</name>
</gene>
<reference key="1">
    <citation type="journal article" date="2005" name="DNA Res.">
        <title>Complete nucleotide sequence of the chloroplast genome from the Tasmanian blue gum, Eucalyptus globulus (Myrtaceae).</title>
        <authorList>
            <person name="Steane D.A."/>
        </authorList>
    </citation>
    <scope>NUCLEOTIDE SEQUENCE [LARGE SCALE GENOMIC DNA]</scope>
</reference>
<accession>Q49L06</accession>
<evidence type="ECO:0000255" key="1">
    <source>
        <dbReference type="HAMAP-Rule" id="MF_01321"/>
    </source>
</evidence>
<name>RPOB_EUCGG</name>
<geneLocation type="chloroplast"/>
<comment type="function">
    <text evidence="1">DNA-dependent RNA polymerase catalyzes the transcription of DNA into RNA using the four ribonucleoside triphosphates as substrates.</text>
</comment>
<comment type="catalytic activity">
    <reaction evidence="1">
        <text>RNA(n) + a ribonucleoside 5'-triphosphate = RNA(n+1) + diphosphate</text>
        <dbReference type="Rhea" id="RHEA:21248"/>
        <dbReference type="Rhea" id="RHEA-COMP:14527"/>
        <dbReference type="Rhea" id="RHEA-COMP:17342"/>
        <dbReference type="ChEBI" id="CHEBI:33019"/>
        <dbReference type="ChEBI" id="CHEBI:61557"/>
        <dbReference type="ChEBI" id="CHEBI:140395"/>
        <dbReference type="EC" id="2.7.7.6"/>
    </reaction>
</comment>
<comment type="subunit">
    <text evidence="1">In plastids the minimal PEP RNA polymerase catalytic core is composed of four subunits: alpha, beta, beta', and beta''. When a (nuclear-encoded) sigma factor is associated with the core the holoenzyme is formed, which can initiate transcription.</text>
</comment>
<comment type="subcellular location">
    <subcellularLocation>
        <location>Plastid</location>
        <location>Chloroplast</location>
    </subcellularLocation>
</comment>
<comment type="similarity">
    <text evidence="1">Belongs to the RNA polymerase beta chain family.</text>
</comment>
<proteinExistence type="inferred from homology"/>
<protein>
    <recommendedName>
        <fullName evidence="1">DNA-directed RNA polymerase subunit beta</fullName>
        <ecNumber evidence="1">2.7.7.6</ecNumber>
    </recommendedName>
    <alternativeName>
        <fullName evidence="1">PEP</fullName>
    </alternativeName>
    <alternativeName>
        <fullName evidence="1">Plastid-encoded RNA polymerase subunit beta</fullName>
        <shortName evidence="1">RNA polymerase subunit beta</shortName>
    </alternativeName>
</protein>
<keyword id="KW-0150">Chloroplast</keyword>
<keyword id="KW-0240">DNA-directed RNA polymerase</keyword>
<keyword id="KW-0548">Nucleotidyltransferase</keyword>
<keyword id="KW-0934">Plastid</keyword>
<keyword id="KW-0804">Transcription</keyword>
<keyword id="KW-0808">Transferase</keyword>
<feature type="chain" id="PRO_0000224128" description="DNA-directed RNA polymerase subunit beta">
    <location>
        <begin position="1"/>
        <end position="1072"/>
    </location>
</feature>
<dbReference type="EC" id="2.7.7.6" evidence="1"/>
<dbReference type="EMBL" id="AY780259">
    <property type="protein sequence ID" value="AAX21021.1"/>
    <property type="molecule type" value="Genomic_DNA"/>
</dbReference>
<dbReference type="RefSeq" id="YP_636291.1">
    <property type="nucleotide sequence ID" value="NC_008115.1"/>
</dbReference>
<dbReference type="SMR" id="Q49L06"/>
<dbReference type="GeneID" id="4108362"/>
<dbReference type="GO" id="GO:0009507">
    <property type="term" value="C:chloroplast"/>
    <property type="evidence" value="ECO:0007669"/>
    <property type="project" value="UniProtKB-SubCell"/>
</dbReference>
<dbReference type="GO" id="GO:0000428">
    <property type="term" value="C:DNA-directed RNA polymerase complex"/>
    <property type="evidence" value="ECO:0007669"/>
    <property type="project" value="UniProtKB-KW"/>
</dbReference>
<dbReference type="GO" id="GO:0005739">
    <property type="term" value="C:mitochondrion"/>
    <property type="evidence" value="ECO:0007669"/>
    <property type="project" value="GOC"/>
</dbReference>
<dbReference type="GO" id="GO:0003677">
    <property type="term" value="F:DNA binding"/>
    <property type="evidence" value="ECO:0007669"/>
    <property type="project" value="UniProtKB-UniRule"/>
</dbReference>
<dbReference type="GO" id="GO:0003899">
    <property type="term" value="F:DNA-directed RNA polymerase activity"/>
    <property type="evidence" value="ECO:0007669"/>
    <property type="project" value="UniProtKB-UniRule"/>
</dbReference>
<dbReference type="GO" id="GO:0032549">
    <property type="term" value="F:ribonucleoside binding"/>
    <property type="evidence" value="ECO:0007669"/>
    <property type="project" value="InterPro"/>
</dbReference>
<dbReference type="GO" id="GO:0006351">
    <property type="term" value="P:DNA-templated transcription"/>
    <property type="evidence" value="ECO:0007669"/>
    <property type="project" value="UniProtKB-UniRule"/>
</dbReference>
<dbReference type="CDD" id="cd00653">
    <property type="entry name" value="RNA_pol_B_RPB2"/>
    <property type="match status" value="1"/>
</dbReference>
<dbReference type="FunFam" id="3.90.1110.10:FF:000009">
    <property type="entry name" value="DNA-directed RNA polymerase subunit beta"/>
    <property type="match status" value="1"/>
</dbReference>
<dbReference type="Gene3D" id="2.40.50.100">
    <property type="match status" value="1"/>
</dbReference>
<dbReference type="Gene3D" id="2.40.50.150">
    <property type="match status" value="1"/>
</dbReference>
<dbReference type="Gene3D" id="3.90.1100.10">
    <property type="match status" value="1"/>
</dbReference>
<dbReference type="Gene3D" id="2.30.150.10">
    <property type="entry name" value="DNA-directed RNA polymerase, beta subunit, external 1 domain"/>
    <property type="match status" value="1"/>
</dbReference>
<dbReference type="Gene3D" id="2.40.270.10">
    <property type="entry name" value="DNA-directed RNA polymerase, subunit 2, domain 6"/>
    <property type="match status" value="1"/>
</dbReference>
<dbReference type="Gene3D" id="3.90.1800.10">
    <property type="entry name" value="RNA polymerase alpha subunit dimerisation domain"/>
    <property type="match status" value="1"/>
</dbReference>
<dbReference type="Gene3D" id="3.90.1110.10">
    <property type="entry name" value="RNA polymerase Rpb2, domain 2"/>
    <property type="match status" value="1"/>
</dbReference>
<dbReference type="HAMAP" id="MF_01321">
    <property type="entry name" value="RNApol_bact_RpoB"/>
    <property type="match status" value="1"/>
</dbReference>
<dbReference type="InterPro" id="IPR042107">
    <property type="entry name" value="DNA-dir_RNA_pol_bsu_ext_1_sf"/>
</dbReference>
<dbReference type="InterPro" id="IPR015712">
    <property type="entry name" value="DNA-dir_RNA_pol_su2"/>
</dbReference>
<dbReference type="InterPro" id="IPR007120">
    <property type="entry name" value="DNA-dir_RNAP_su2_dom"/>
</dbReference>
<dbReference type="InterPro" id="IPR037033">
    <property type="entry name" value="DNA-dir_RNAP_su2_hyb_sf"/>
</dbReference>
<dbReference type="InterPro" id="IPR010243">
    <property type="entry name" value="RNA_pol_bsu_bac"/>
</dbReference>
<dbReference type="InterPro" id="IPR007121">
    <property type="entry name" value="RNA_pol_bsu_CS"/>
</dbReference>
<dbReference type="InterPro" id="IPR007642">
    <property type="entry name" value="RNA_pol_Rpb2_2"/>
</dbReference>
<dbReference type="InterPro" id="IPR037034">
    <property type="entry name" value="RNA_pol_Rpb2_2_sf"/>
</dbReference>
<dbReference type="InterPro" id="IPR007645">
    <property type="entry name" value="RNA_pol_Rpb2_3"/>
</dbReference>
<dbReference type="InterPro" id="IPR007641">
    <property type="entry name" value="RNA_pol_Rpb2_7"/>
</dbReference>
<dbReference type="InterPro" id="IPR014724">
    <property type="entry name" value="RNA_pol_RPB2_OB-fold"/>
</dbReference>
<dbReference type="NCBIfam" id="NF001616">
    <property type="entry name" value="PRK00405.1"/>
    <property type="match status" value="1"/>
</dbReference>
<dbReference type="PANTHER" id="PTHR20856">
    <property type="entry name" value="DNA-DIRECTED RNA POLYMERASE I SUBUNIT 2"/>
    <property type="match status" value="1"/>
</dbReference>
<dbReference type="Pfam" id="PF04561">
    <property type="entry name" value="RNA_pol_Rpb2_2"/>
    <property type="match status" value="1"/>
</dbReference>
<dbReference type="Pfam" id="PF04565">
    <property type="entry name" value="RNA_pol_Rpb2_3"/>
    <property type="match status" value="1"/>
</dbReference>
<dbReference type="Pfam" id="PF00562">
    <property type="entry name" value="RNA_pol_Rpb2_6"/>
    <property type="match status" value="1"/>
</dbReference>
<dbReference type="Pfam" id="PF04560">
    <property type="entry name" value="RNA_pol_Rpb2_7"/>
    <property type="match status" value="1"/>
</dbReference>
<dbReference type="SUPFAM" id="SSF64484">
    <property type="entry name" value="beta and beta-prime subunits of DNA dependent RNA-polymerase"/>
    <property type="match status" value="1"/>
</dbReference>
<dbReference type="PROSITE" id="PS01166">
    <property type="entry name" value="RNA_POL_BETA"/>
    <property type="match status" value="1"/>
</dbReference>
<organism>
    <name type="scientific">Eucalyptus globulus subsp. globulus</name>
    <name type="common">Tasmanian blue gum</name>
    <dbReference type="NCBI Taxonomy" id="71271"/>
    <lineage>
        <taxon>Eukaryota</taxon>
        <taxon>Viridiplantae</taxon>
        <taxon>Streptophyta</taxon>
        <taxon>Embryophyta</taxon>
        <taxon>Tracheophyta</taxon>
        <taxon>Spermatophyta</taxon>
        <taxon>Magnoliopsida</taxon>
        <taxon>eudicotyledons</taxon>
        <taxon>Gunneridae</taxon>
        <taxon>Pentapetalae</taxon>
        <taxon>rosids</taxon>
        <taxon>malvids</taxon>
        <taxon>Myrtales</taxon>
        <taxon>Myrtaceae</taxon>
        <taxon>Myrtoideae</taxon>
        <taxon>Eucalypteae</taxon>
        <taxon>Eucalyptus</taxon>
    </lineage>
</organism>
<sequence>MLGDGNEGMSTIPGFNQIQFEGFCRFIDQGLTEELIKFPKIEDTDQEIEFQLFVETYQLVEPLIKERDAVYESLTYSSELYVSAGLIWKTSRDMQEQTLFIGNIPLMNSLGTSIVNGIYRIVINQILQSPGIYYRSELDHNGISVYTGTIISDWGGRLELEIDRKARIWARVSRKQKISILVLSSAMGSNLREILENVCYPEIFLSFLNDKEKKKIGSKENAILEFYQQFACVGGDPVFSESLCKELQKKFFQQRCELGRIGRRNMNRRLNLDIPQNNTFLLPRDILAAADHLIGMKFGMGTLDDMNHLKNKRIRSVADLLQDQFGLALVRLENVVKGTICGAIRHKLIPTPQNLVTSTPLTTTYESFFGLHPLSQVLDRTNPLTQIVHGRKLSYLGPGGLTGRTASFRIRDIHPSHYGRICPIDTSEGINVGLIGSLAIHARIGQGGSLESPFYEISERSKSKKVRMLYLSPSRDEYYMIAAGNSLALNQRIQEEQVVPARYRQEFLTIAWEQVNLRSIFPFQYFSIGASLIPFIEHNDANRALMSSNMQRQAVPLSRSEKCIVGTGLERQAALDSGVTAIAEHEGKIIYTNTDKIILLGNGDTLSIPLVMYQRSNKNTCMHQKPQVPRGKCIKKGQILADGAATVGGELALGKNVLVAYLPWEGYNFEDAVLISERLVYEDIYTSFHIRKYEIQTHVTSQGPERITNEIPHLEAHLLRNLDKNGIVMLGSWVEAGDVLVGKLTPQTAKESSYAPEDRLLRAILGIQVSTSKETCLKLPIGGRGRVIDVRWIQKKGGSNYNPETICVYILQKREIKVGDKVAGRHGNKGIISKILPRQDMPYLQDGRPVDMVFNPLGVPSRMNVGQIFECSLGLAGDLLDRHYRIAPFDERYEQEASRKLVFSELYEASQQTANPWVFEPEYPGKSRIFDGRTGDPFEQPVIIGKPYILKLIHQVDDKIHGRSSGHYALVTQQPLRGRAKQGGQRVGEMEVWALEGFGVAHILQEMLTYKSDHIRARQEVLGTTIIGGTIPKPKDAPESFRLLVRELRSLSLELNHFLVSEKNFQINRKEA</sequence>